<evidence type="ECO:0000250" key="1"/>
<evidence type="ECO:0000250" key="2">
    <source>
        <dbReference type="UniProtKB" id="Q96242"/>
    </source>
</evidence>
<evidence type="ECO:0000255" key="3"/>
<evidence type="ECO:0000269" key="4">
    <source>
    </source>
</evidence>
<evidence type="ECO:0000269" key="5">
    <source>
    </source>
</evidence>
<evidence type="ECO:0000269" key="6">
    <source>
    </source>
</evidence>
<evidence type="ECO:0000269" key="7">
    <source>
    </source>
</evidence>
<evidence type="ECO:0000269" key="8">
    <source>
    </source>
</evidence>
<evidence type="ECO:0000303" key="9">
    <source>
    </source>
</evidence>
<evidence type="ECO:0000303" key="10">
    <source>
    </source>
</evidence>
<evidence type="ECO:0000305" key="11"/>
<evidence type="ECO:0000312" key="12">
    <source>
        <dbReference type="Araport" id="AT2G27690"/>
    </source>
</evidence>
<organism>
    <name type="scientific">Arabidopsis thaliana</name>
    <name type="common">Mouse-ear cress</name>
    <dbReference type="NCBI Taxonomy" id="3702"/>
    <lineage>
        <taxon>Eukaryota</taxon>
        <taxon>Viridiplantae</taxon>
        <taxon>Streptophyta</taxon>
        <taxon>Embryophyta</taxon>
        <taxon>Tracheophyta</taxon>
        <taxon>Spermatophyta</taxon>
        <taxon>Magnoliopsida</taxon>
        <taxon>eudicotyledons</taxon>
        <taxon>Gunneridae</taxon>
        <taxon>Pentapetalae</taxon>
        <taxon>rosids</taxon>
        <taxon>malvids</taxon>
        <taxon>Brassicales</taxon>
        <taxon>Brassicaceae</taxon>
        <taxon>Camelineae</taxon>
        <taxon>Arabidopsis</taxon>
    </lineage>
</organism>
<sequence>MLLIISFTIVSFFFIIIFSLFHLLFLQKLRYCNCEICHAYLTSSWKKDFINLSDWYTHLLRRSPTSTIKVHVLNSVITANPSNVEHILKTNFHNYPKGKQFSVILGDLLGRGIFNSDGDTWRFQRKLASLELGSVSVRVFAHEIVKTEIETRLLPILTSFSDNPGSVLDLQDVFRRFSFDTISKLSFGFDPDCLRLPFPISEFAVAFDTASLLSAKRALAPFPLLWKTKRLLRIGSEKKLQESINVINRLAGDLIKQRRLTGLMGKNDLISRFMAVVAEDDDEYLRDIVVSFLLAGRDTVAAGLTGFFWLLTRHPEVENRIREELDRVMGTGFDSVTARCDEMREMDYLHASLYESMRLFPPVQFDSKFALNDDVLSDGTFVNSGTRVTYHAYAMGRMDRIWGPDYEEFKPERWLDNEGKFRPENPVKYPVFQAGARVCIGKEMAIMEMKSIAVAIIRRFETRVASPETTETLRFAPGLTATVNGGLPVMIQERS</sequence>
<accession>Q9ZUX1</accession>
<gene>
    <name evidence="9" type="primary">CYP94C1</name>
    <name evidence="12" type="ordered locus">At2g27690</name>
    <name type="ORF">F15K20.21</name>
</gene>
<name>C94C1_ARATH</name>
<protein>
    <recommendedName>
        <fullName evidence="11">Cytochrome P450 94C1</fullName>
        <ecNumber evidence="6 8">1.14.14.49</ecNumber>
    </recommendedName>
    <alternativeName>
        <fullName evidence="10">12-hydroxyjasmonoyl-L-amino acid 12-hydroxylase</fullName>
    </alternativeName>
</protein>
<proteinExistence type="evidence at protein level"/>
<comment type="function">
    <text evidence="4 6 8">Involved in the oxidation of the plant hormone jasmonoyl-L-isoleucine (JA-Ile), a bioactive phytohormone of the jasmonate-mediated signaling pathway. Converts 12-hydroxy-JA-Ile (12OH-JA-Ile) to the carboxy-derivative 12COOH-JA-Ile (PubMed:17868380, PubMed:22215670, PubMed:26164240). Exerts negative feedback control on JA-Ile levels and plays a role in attenuation of jasmonate responses (PubMed:22215670). Also functions as in-chain fatty acids hydroxylase in vitro (PubMed:17868380). Catalyzes the hydroxylation of 12-hydroxy-jasmonoyl-L-phenylalanine (12OH-JA-Phe) in vitro. Converts 12OH-JA-Phe to the carboxy-derivative 12COOH-JA-Phe (PubMed:26164240).</text>
</comment>
<comment type="catalytic activity">
    <reaction evidence="6 8">
        <text>a 12-hydroxyjasmonyl-L-alpha-amino acid + 2 reduced [NADPH--hemoprotein reductase] + 2 O2 = a 12-hydroxy-12-oxojasmonyl-L-alpha-amino acid + 2 oxidized [NADPH--hemoprotein reductase] + 3 H2O + 3 H(+)</text>
        <dbReference type="Rhea" id="RHEA:55056"/>
        <dbReference type="Rhea" id="RHEA-COMP:11964"/>
        <dbReference type="Rhea" id="RHEA-COMP:11965"/>
        <dbReference type="ChEBI" id="CHEBI:15377"/>
        <dbReference type="ChEBI" id="CHEBI:15378"/>
        <dbReference type="ChEBI" id="CHEBI:15379"/>
        <dbReference type="ChEBI" id="CHEBI:57618"/>
        <dbReference type="ChEBI" id="CHEBI:58210"/>
        <dbReference type="ChEBI" id="CHEBI:138374"/>
        <dbReference type="ChEBI" id="CHEBI:138464"/>
        <dbReference type="EC" id="1.14.14.49"/>
    </reaction>
</comment>
<comment type="cofactor">
    <cofactor evidence="2">
        <name>heme</name>
        <dbReference type="ChEBI" id="CHEBI:30413"/>
    </cofactor>
</comment>
<comment type="subcellular location">
    <subcellularLocation>
        <location evidence="11">Membrane</location>
        <topology evidence="11">Single-pass membrane protein</topology>
    </subcellularLocation>
    <subcellularLocation>
        <location evidence="7">Endoplasmic reticulum membrane</location>
        <topology evidence="3">Single-pass membrane protein</topology>
    </subcellularLocation>
</comment>
<comment type="induction">
    <text evidence="4 5 6">Induced by methyl jasmonate and wounding.</text>
</comment>
<comment type="disruption phenotype">
    <text evidence="6">No visible phenotype under normal growth conditions, but mutant plants accumulate high amounts of 12COOH-JA-Ile in response to wounding.</text>
</comment>
<comment type="similarity">
    <text evidence="11">Belongs to the cytochrome P450 family.</text>
</comment>
<feature type="chain" id="PRO_0000425854" description="Cytochrome P450 94C1">
    <location>
        <begin position="1"/>
        <end position="495"/>
    </location>
</feature>
<feature type="transmembrane region" description="Helical" evidence="3">
    <location>
        <begin position="2"/>
        <end position="22"/>
    </location>
</feature>
<feature type="binding site" description="axial binding residue" evidence="1">
    <location>
        <position position="439"/>
    </location>
    <ligand>
        <name>heme</name>
        <dbReference type="ChEBI" id="CHEBI:30413"/>
    </ligand>
    <ligandPart>
        <name>Fe</name>
        <dbReference type="ChEBI" id="CHEBI:18248"/>
    </ligandPart>
</feature>
<dbReference type="EC" id="1.14.14.49" evidence="6 8"/>
<dbReference type="EMBL" id="DQ201797">
    <property type="protein sequence ID" value="ABA61324.1"/>
    <property type="molecule type" value="mRNA"/>
</dbReference>
<dbReference type="EMBL" id="AC005824">
    <property type="protein sequence ID" value="AAC73031.1"/>
    <property type="molecule type" value="Genomic_DNA"/>
</dbReference>
<dbReference type="EMBL" id="CP002685">
    <property type="protein sequence ID" value="AEC08026.1"/>
    <property type="molecule type" value="Genomic_DNA"/>
</dbReference>
<dbReference type="EMBL" id="AF370593">
    <property type="protein sequence ID" value="AAK43912.1"/>
    <property type="molecule type" value="mRNA"/>
</dbReference>
<dbReference type="EMBL" id="AF462844">
    <property type="protein sequence ID" value="AAL58931.1"/>
    <property type="molecule type" value="mRNA"/>
</dbReference>
<dbReference type="EMBL" id="BT026386">
    <property type="protein sequence ID" value="ABH04493.1"/>
    <property type="molecule type" value="mRNA"/>
</dbReference>
<dbReference type="PIR" id="G84675">
    <property type="entry name" value="G84675"/>
</dbReference>
<dbReference type="RefSeq" id="NP_180337.1">
    <property type="nucleotide sequence ID" value="NM_128328.3"/>
</dbReference>
<dbReference type="SMR" id="Q9ZUX1"/>
<dbReference type="FunCoup" id="Q9ZUX1">
    <property type="interactions" value="209"/>
</dbReference>
<dbReference type="STRING" id="3702.Q9ZUX1"/>
<dbReference type="iPTMnet" id="Q9ZUX1"/>
<dbReference type="PaxDb" id="3702-AT2G27690.1"/>
<dbReference type="ProteomicsDB" id="240240"/>
<dbReference type="EnsemblPlants" id="AT2G27690.1">
    <property type="protein sequence ID" value="AT2G27690.1"/>
    <property type="gene ID" value="AT2G27690"/>
</dbReference>
<dbReference type="GeneID" id="817315"/>
<dbReference type="Gramene" id="AT2G27690.1">
    <property type="protein sequence ID" value="AT2G27690.1"/>
    <property type="gene ID" value="AT2G27690"/>
</dbReference>
<dbReference type="KEGG" id="ath:AT2G27690"/>
<dbReference type="Araport" id="AT2G27690"/>
<dbReference type="TAIR" id="AT2G27690">
    <property type="gene designation" value="CYP94C1"/>
</dbReference>
<dbReference type="eggNOG" id="KOG0157">
    <property type="taxonomic scope" value="Eukaryota"/>
</dbReference>
<dbReference type="HOGENOM" id="CLU_001570_27_2_1"/>
<dbReference type="InParanoid" id="Q9ZUX1"/>
<dbReference type="OMA" id="FRIAPWH"/>
<dbReference type="OrthoDB" id="1470350at2759"/>
<dbReference type="PhylomeDB" id="Q9ZUX1"/>
<dbReference type="BioCyc" id="ARA:AT2G27690-MONOMER"/>
<dbReference type="BioCyc" id="MetaCyc:AT2G27690-MONOMER"/>
<dbReference type="BRENDA" id="1.14.14.49">
    <property type="organism ID" value="399"/>
</dbReference>
<dbReference type="BRENDA" id="1.14.14.80">
    <property type="organism ID" value="399"/>
</dbReference>
<dbReference type="PRO" id="PR:Q9ZUX1"/>
<dbReference type="Proteomes" id="UP000006548">
    <property type="component" value="Chromosome 2"/>
</dbReference>
<dbReference type="ExpressionAtlas" id="Q9ZUX1">
    <property type="expression patterns" value="baseline and differential"/>
</dbReference>
<dbReference type="GO" id="GO:0005789">
    <property type="term" value="C:endoplasmic reticulum membrane"/>
    <property type="evidence" value="ECO:0000314"/>
    <property type="project" value="UniProtKB"/>
</dbReference>
<dbReference type="GO" id="GO:0043231">
    <property type="term" value="C:intracellular membrane-bounded organelle"/>
    <property type="evidence" value="ECO:0000314"/>
    <property type="project" value="TAIR"/>
</dbReference>
<dbReference type="GO" id="GO:0018685">
    <property type="term" value="F:alkane 1-monooxygenase activity"/>
    <property type="evidence" value="ECO:0000314"/>
    <property type="project" value="TAIR"/>
</dbReference>
<dbReference type="GO" id="GO:0020037">
    <property type="term" value="F:heme binding"/>
    <property type="evidence" value="ECO:0007669"/>
    <property type="project" value="InterPro"/>
</dbReference>
<dbReference type="GO" id="GO:0005506">
    <property type="term" value="F:iron ion binding"/>
    <property type="evidence" value="ECO:0007669"/>
    <property type="project" value="InterPro"/>
</dbReference>
<dbReference type="GO" id="GO:0009611">
    <property type="term" value="P:response to wounding"/>
    <property type="evidence" value="ECO:0000270"/>
    <property type="project" value="TAIR"/>
</dbReference>
<dbReference type="CDD" id="cd11064">
    <property type="entry name" value="CYP86A"/>
    <property type="match status" value="1"/>
</dbReference>
<dbReference type="FunFam" id="1.10.630.10:FF:000044">
    <property type="entry name" value="Cytochrome P450"/>
    <property type="match status" value="1"/>
</dbReference>
<dbReference type="Gene3D" id="1.10.630.10">
    <property type="entry name" value="Cytochrome P450"/>
    <property type="match status" value="1"/>
</dbReference>
<dbReference type="InterPro" id="IPR001128">
    <property type="entry name" value="Cyt_P450"/>
</dbReference>
<dbReference type="InterPro" id="IPR002401">
    <property type="entry name" value="Cyt_P450_E_grp-I"/>
</dbReference>
<dbReference type="InterPro" id="IPR036396">
    <property type="entry name" value="Cyt_P450_sf"/>
</dbReference>
<dbReference type="PANTHER" id="PTHR24296">
    <property type="entry name" value="CYTOCHROME P450"/>
    <property type="match status" value="1"/>
</dbReference>
<dbReference type="Pfam" id="PF00067">
    <property type="entry name" value="p450"/>
    <property type="match status" value="1"/>
</dbReference>
<dbReference type="PRINTS" id="PR00463">
    <property type="entry name" value="EP450I"/>
</dbReference>
<dbReference type="PRINTS" id="PR00385">
    <property type="entry name" value="P450"/>
</dbReference>
<dbReference type="SUPFAM" id="SSF48264">
    <property type="entry name" value="Cytochrome P450"/>
    <property type="match status" value="1"/>
</dbReference>
<keyword id="KW-0256">Endoplasmic reticulum</keyword>
<keyword id="KW-0349">Heme</keyword>
<keyword id="KW-0408">Iron</keyword>
<keyword id="KW-1184">Jasmonic acid signaling pathway</keyword>
<keyword id="KW-0472">Membrane</keyword>
<keyword id="KW-0479">Metal-binding</keyword>
<keyword id="KW-0503">Monooxygenase</keyword>
<keyword id="KW-0560">Oxidoreductase</keyword>
<keyword id="KW-1185">Reference proteome</keyword>
<keyword id="KW-0812">Transmembrane</keyword>
<keyword id="KW-1133">Transmembrane helix</keyword>
<reference key="1">
    <citation type="submission" date="2005-09" db="EMBL/GenBank/DDBJ databases">
        <title>Arabidopsis CYP94B1 and CYP94C1: fatty acid hydroxylases induced by stress signaling molecules.</title>
        <authorList>
            <person name="Civjan N.R."/>
            <person name="Duan H."/>
            <person name="Schuler M.A."/>
        </authorList>
    </citation>
    <scope>NUCLEOTIDE SEQUENCE [MRNA]</scope>
</reference>
<reference key="2">
    <citation type="journal article" date="1999" name="Nature">
        <title>Sequence and analysis of chromosome 2 of the plant Arabidopsis thaliana.</title>
        <authorList>
            <person name="Lin X."/>
            <person name="Kaul S."/>
            <person name="Rounsley S.D."/>
            <person name="Shea T.P."/>
            <person name="Benito M.-I."/>
            <person name="Town C.D."/>
            <person name="Fujii C.Y."/>
            <person name="Mason T.M."/>
            <person name="Bowman C.L."/>
            <person name="Barnstead M.E."/>
            <person name="Feldblyum T.V."/>
            <person name="Buell C.R."/>
            <person name="Ketchum K.A."/>
            <person name="Lee J.J."/>
            <person name="Ronning C.M."/>
            <person name="Koo H.L."/>
            <person name="Moffat K.S."/>
            <person name="Cronin L.A."/>
            <person name="Shen M."/>
            <person name="Pai G."/>
            <person name="Van Aken S."/>
            <person name="Umayam L."/>
            <person name="Tallon L.J."/>
            <person name="Gill J.E."/>
            <person name="Adams M.D."/>
            <person name="Carrera A.J."/>
            <person name="Creasy T.H."/>
            <person name="Goodman H.M."/>
            <person name="Somerville C.R."/>
            <person name="Copenhaver G.P."/>
            <person name="Preuss D."/>
            <person name="Nierman W.C."/>
            <person name="White O."/>
            <person name="Eisen J.A."/>
            <person name="Salzberg S.L."/>
            <person name="Fraser C.M."/>
            <person name="Venter J.C."/>
        </authorList>
    </citation>
    <scope>NUCLEOTIDE SEQUENCE [LARGE SCALE GENOMIC DNA]</scope>
    <source>
        <strain>cv. Columbia</strain>
    </source>
</reference>
<reference key="3">
    <citation type="journal article" date="2017" name="Plant J.">
        <title>Araport11: a complete reannotation of the Arabidopsis thaliana reference genome.</title>
        <authorList>
            <person name="Cheng C.Y."/>
            <person name="Krishnakumar V."/>
            <person name="Chan A.P."/>
            <person name="Thibaud-Nissen F."/>
            <person name="Schobel S."/>
            <person name="Town C.D."/>
        </authorList>
    </citation>
    <scope>GENOME REANNOTATION</scope>
    <source>
        <strain>cv. Columbia</strain>
    </source>
</reference>
<reference key="4">
    <citation type="journal article" date="2003" name="Science">
        <title>Empirical analysis of transcriptional activity in the Arabidopsis genome.</title>
        <authorList>
            <person name="Yamada K."/>
            <person name="Lim J."/>
            <person name="Dale J.M."/>
            <person name="Chen H."/>
            <person name="Shinn P."/>
            <person name="Palm C.J."/>
            <person name="Southwick A.M."/>
            <person name="Wu H.C."/>
            <person name="Kim C.J."/>
            <person name="Nguyen M."/>
            <person name="Pham P.K."/>
            <person name="Cheuk R.F."/>
            <person name="Karlin-Newmann G."/>
            <person name="Liu S.X."/>
            <person name="Lam B."/>
            <person name="Sakano H."/>
            <person name="Wu T."/>
            <person name="Yu G."/>
            <person name="Miranda M."/>
            <person name="Quach H.L."/>
            <person name="Tripp M."/>
            <person name="Chang C.H."/>
            <person name="Lee J.M."/>
            <person name="Toriumi M.J."/>
            <person name="Chan M.M."/>
            <person name="Tang C.C."/>
            <person name="Onodera C.S."/>
            <person name="Deng J.M."/>
            <person name="Akiyama K."/>
            <person name="Ansari Y."/>
            <person name="Arakawa T."/>
            <person name="Banh J."/>
            <person name="Banno F."/>
            <person name="Bowser L."/>
            <person name="Brooks S.Y."/>
            <person name="Carninci P."/>
            <person name="Chao Q."/>
            <person name="Choy N."/>
            <person name="Enju A."/>
            <person name="Goldsmith A.D."/>
            <person name="Gurjal M."/>
            <person name="Hansen N.F."/>
            <person name="Hayashizaki Y."/>
            <person name="Johnson-Hopson C."/>
            <person name="Hsuan V.W."/>
            <person name="Iida K."/>
            <person name="Karnes M."/>
            <person name="Khan S."/>
            <person name="Koesema E."/>
            <person name="Ishida J."/>
            <person name="Jiang P.X."/>
            <person name="Jones T."/>
            <person name="Kawai J."/>
            <person name="Kamiya A."/>
            <person name="Meyers C."/>
            <person name="Nakajima M."/>
            <person name="Narusaka M."/>
            <person name="Seki M."/>
            <person name="Sakurai T."/>
            <person name="Satou M."/>
            <person name="Tamse R."/>
            <person name="Vaysberg M."/>
            <person name="Wallender E.K."/>
            <person name="Wong C."/>
            <person name="Yamamura Y."/>
            <person name="Yuan S."/>
            <person name="Shinozaki K."/>
            <person name="Davis R.W."/>
            <person name="Theologis A."/>
            <person name="Ecker J.R."/>
        </authorList>
    </citation>
    <scope>NUCLEOTIDE SEQUENCE [LARGE SCALE MRNA]</scope>
    <source>
        <strain>cv. Columbia</strain>
    </source>
</reference>
<reference key="5">
    <citation type="submission" date="2006-08" db="EMBL/GenBank/DDBJ databases">
        <title>Arabidopsis ORF Clones.</title>
        <authorList>
            <person name="Quinitio C."/>
            <person name="Chen H."/>
            <person name="Kim C.J."/>
            <person name="Shinn P."/>
            <person name="Ecker J.R."/>
        </authorList>
    </citation>
    <scope>NUCLEOTIDE SEQUENCE [LARGE SCALE MRNA]</scope>
</reference>
<reference key="6">
    <citation type="journal article" date="2007" name="FEBS J.">
        <title>Characterization of a methyl jasmonate and wounding-responsive cytochrome P450 of Arabidopsis thaliana catalyzing dicarboxylic fatty acid formation in vitro.</title>
        <authorList>
            <person name="Kandel S."/>
            <person name="Sauveplane V."/>
            <person name="Compagnon V."/>
            <person name="Franke R."/>
            <person name="Millet Y."/>
            <person name="Schreiber L."/>
            <person name="Werck-Reichhart D."/>
            <person name="Pinot F."/>
        </authorList>
    </citation>
    <scope>FUNCTION</scope>
    <scope>INDUCTION</scope>
</reference>
<reference key="7">
    <citation type="journal article" date="2011" name="Proc. Natl. Acad. Sci. U.S.A.">
        <title>Cytochrome P450 CYP94B3 mediates catabolism and inactivation of the plant hormone jasmonoyl-L-isoleucine.</title>
        <authorList>
            <person name="Koo A.J."/>
            <person name="Cooke T.F."/>
            <person name="Howe G.A."/>
        </authorList>
    </citation>
    <scope>INDUCTION BY WOUNDING</scope>
</reference>
<reference key="8">
    <citation type="journal article" date="2012" name="J. Biol. Chem.">
        <title>Cytochromes P450 CYP94C1 and CYP94B3 catalyze two successive oxidation steps of plant hormone jasmonoyl-isoleucine for catabolic turnover.</title>
        <authorList>
            <person name="Heitz T."/>
            <person name="Widemann E."/>
            <person name="Lugan R."/>
            <person name="Miesch L."/>
            <person name="Ullmann P."/>
            <person name="Desaubry L."/>
            <person name="Holder E."/>
            <person name="Grausem B."/>
            <person name="Kandel S."/>
            <person name="Miesch M."/>
            <person name="Werck-Reichhart D."/>
            <person name="Pinot F."/>
        </authorList>
    </citation>
    <scope>FUNCTION</scope>
    <scope>CATALYTIC ACTIVITY</scope>
    <scope>INDUCTION BY WOUNDING</scope>
    <scope>DISRUPTION PHENOTYPE</scope>
</reference>
<reference key="9">
    <citation type="journal article" date="2014" name="J. Biol. Chem.">
        <title>Endoplasmic reticulum-associated inactivation of the hormone jasmonoyl-L-isoleucine by multiple members of the cytochrome P450 94 family in Arabidopsis.</title>
        <authorList>
            <person name="Koo A.J."/>
            <person name="Thireault C."/>
            <person name="Zemelis S."/>
            <person name="Poudel A.N."/>
            <person name="Zhang T."/>
            <person name="Kitaoka N."/>
            <person name="Brandizzi F."/>
            <person name="Matsuura H."/>
            <person name="Howe G.A."/>
        </authorList>
    </citation>
    <scope>SUBCELLULAR LOCATION</scope>
</reference>
<reference key="10">
    <citation type="journal article" date="2015" name="Phytochemistry">
        <title>Sequential oxidation of jasmonoyl-phenylalanine and jasmonoyl-isoleucine by multiple cytochrome P450 of the CYP94 family through newly identified aldehyde intermediates.</title>
        <authorList>
            <person name="Widemann E."/>
            <person name="Grausem B."/>
            <person name="Renault H."/>
            <person name="Pineau E."/>
            <person name="Heinrich C."/>
            <person name="Lugan R."/>
            <person name="Ullmann P."/>
            <person name="Miesch L."/>
            <person name="Aubert Y."/>
            <person name="Miesch M."/>
            <person name="Heitz T."/>
            <person name="Pinot F."/>
        </authorList>
    </citation>
    <scope>FUNCTION</scope>
    <scope>CATALYTIC ACTIVITY</scope>
</reference>